<gene>
    <name evidence="1" type="primary">atpD</name>
    <name type="ordered locus">Tbd_2797</name>
</gene>
<dbReference type="EC" id="7.1.2.2" evidence="1"/>
<dbReference type="EMBL" id="CP000116">
    <property type="protein sequence ID" value="AAZ98750.1"/>
    <property type="molecule type" value="Genomic_DNA"/>
</dbReference>
<dbReference type="RefSeq" id="WP_011313309.1">
    <property type="nucleotide sequence ID" value="NC_007404.1"/>
</dbReference>
<dbReference type="SMR" id="Q3SF66"/>
<dbReference type="STRING" id="292415.Tbd_2797"/>
<dbReference type="KEGG" id="tbd:Tbd_2797"/>
<dbReference type="eggNOG" id="COG0055">
    <property type="taxonomic scope" value="Bacteria"/>
</dbReference>
<dbReference type="HOGENOM" id="CLU_022398_0_2_4"/>
<dbReference type="OrthoDB" id="9801639at2"/>
<dbReference type="Proteomes" id="UP000008291">
    <property type="component" value="Chromosome"/>
</dbReference>
<dbReference type="GO" id="GO:0005886">
    <property type="term" value="C:plasma membrane"/>
    <property type="evidence" value="ECO:0007669"/>
    <property type="project" value="UniProtKB-SubCell"/>
</dbReference>
<dbReference type="GO" id="GO:0045259">
    <property type="term" value="C:proton-transporting ATP synthase complex"/>
    <property type="evidence" value="ECO:0007669"/>
    <property type="project" value="UniProtKB-KW"/>
</dbReference>
<dbReference type="GO" id="GO:0005524">
    <property type="term" value="F:ATP binding"/>
    <property type="evidence" value="ECO:0007669"/>
    <property type="project" value="UniProtKB-UniRule"/>
</dbReference>
<dbReference type="GO" id="GO:0016887">
    <property type="term" value="F:ATP hydrolysis activity"/>
    <property type="evidence" value="ECO:0007669"/>
    <property type="project" value="InterPro"/>
</dbReference>
<dbReference type="GO" id="GO:0046933">
    <property type="term" value="F:proton-transporting ATP synthase activity, rotational mechanism"/>
    <property type="evidence" value="ECO:0007669"/>
    <property type="project" value="UniProtKB-UniRule"/>
</dbReference>
<dbReference type="CDD" id="cd18110">
    <property type="entry name" value="ATP-synt_F1_beta_C"/>
    <property type="match status" value="1"/>
</dbReference>
<dbReference type="CDD" id="cd18115">
    <property type="entry name" value="ATP-synt_F1_beta_N"/>
    <property type="match status" value="1"/>
</dbReference>
<dbReference type="CDD" id="cd01133">
    <property type="entry name" value="F1-ATPase_beta_CD"/>
    <property type="match status" value="1"/>
</dbReference>
<dbReference type="FunFam" id="1.10.1140.10:FF:000001">
    <property type="entry name" value="ATP synthase subunit beta"/>
    <property type="match status" value="1"/>
</dbReference>
<dbReference type="FunFam" id="3.40.50.300:FF:000004">
    <property type="entry name" value="ATP synthase subunit beta"/>
    <property type="match status" value="1"/>
</dbReference>
<dbReference type="Gene3D" id="2.40.10.170">
    <property type="match status" value="1"/>
</dbReference>
<dbReference type="Gene3D" id="1.10.1140.10">
    <property type="entry name" value="Bovine Mitochondrial F1-atpase, Atp Synthase Beta Chain, Chain D, domain 3"/>
    <property type="match status" value="1"/>
</dbReference>
<dbReference type="Gene3D" id="3.40.50.300">
    <property type="entry name" value="P-loop containing nucleotide triphosphate hydrolases"/>
    <property type="match status" value="1"/>
</dbReference>
<dbReference type="HAMAP" id="MF_01347">
    <property type="entry name" value="ATP_synth_beta_bact"/>
    <property type="match status" value="1"/>
</dbReference>
<dbReference type="InterPro" id="IPR003593">
    <property type="entry name" value="AAA+_ATPase"/>
</dbReference>
<dbReference type="InterPro" id="IPR055190">
    <property type="entry name" value="ATP-synt_VA_C"/>
</dbReference>
<dbReference type="InterPro" id="IPR005722">
    <property type="entry name" value="ATP_synth_F1_bsu"/>
</dbReference>
<dbReference type="InterPro" id="IPR020003">
    <property type="entry name" value="ATPase_a/bsu_AS"/>
</dbReference>
<dbReference type="InterPro" id="IPR050053">
    <property type="entry name" value="ATPase_alpha/beta_chains"/>
</dbReference>
<dbReference type="InterPro" id="IPR004100">
    <property type="entry name" value="ATPase_F1/V1/A1_a/bsu_N"/>
</dbReference>
<dbReference type="InterPro" id="IPR036121">
    <property type="entry name" value="ATPase_F1/V1/A1_a/bsu_N_sf"/>
</dbReference>
<dbReference type="InterPro" id="IPR000194">
    <property type="entry name" value="ATPase_F1/V1/A1_a/bsu_nucl-bd"/>
</dbReference>
<dbReference type="InterPro" id="IPR024034">
    <property type="entry name" value="ATPase_F1/V1_b/a_C"/>
</dbReference>
<dbReference type="InterPro" id="IPR027417">
    <property type="entry name" value="P-loop_NTPase"/>
</dbReference>
<dbReference type="NCBIfam" id="TIGR01039">
    <property type="entry name" value="atpD"/>
    <property type="match status" value="1"/>
</dbReference>
<dbReference type="PANTHER" id="PTHR15184">
    <property type="entry name" value="ATP SYNTHASE"/>
    <property type="match status" value="1"/>
</dbReference>
<dbReference type="PANTHER" id="PTHR15184:SF71">
    <property type="entry name" value="ATP SYNTHASE SUBUNIT BETA, MITOCHONDRIAL"/>
    <property type="match status" value="1"/>
</dbReference>
<dbReference type="Pfam" id="PF00006">
    <property type="entry name" value="ATP-synt_ab"/>
    <property type="match status" value="1"/>
</dbReference>
<dbReference type="Pfam" id="PF02874">
    <property type="entry name" value="ATP-synt_ab_N"/>
    <property type="match status" value="1"/>
</dbReference>
<dbReference type="Pfam" id="PF22919">
    <property type="entry name" value="ATP-synt_VA_C"/>
    <property type="match status" value="1"/>
</dbReference>
<dbReference type="SMART" id="SM00382">
    <property type="entry name" value="AAA"/>
    <property type="match status" value="1"/>
</dbReference>
<dbReference type="SUPFAM" id="SSF47917">
    <property type="entry name" value="C-terminal domain of alpha and beta subunits of F1 ATP synthase"/>
    <property type="match status" value="1"/>
</dbReference>
<dbReference type="SUPFAM" id="SSF50615">
    <property type="entry name" value="N-terminal domain of alpha and beta subunits of F1 ATP synthase"/>
    <property type="match status" value="1"/>
</dbReference>
<dbReference type="SUPFAM" id="SSF52540">
    <property type="entry name" value="P-loop containing nucleoside triphosphate hydrolases"/>
    <property type="match status" value="1"/>
</dbReference>
<dbReference type="PROSITE" id="PS00152">
    <property type="entry name" value="ATPASE_ALPHA_BETA"/>
    <property type="match status" value="1"/>
</dbReference>
<comment type="function">
    <text evidence="1">Produces ATP from ADP in the presence of a proton gradient across the membrane. The catalytic sites are hosted primarily by the beta subunits.</text>
</comment>
<comment type="catalytic activity">
    <reaction evidence="1">
        <text>ATP + H2O + 4 H(+)(in) = ADP + phosphate + 5 H(+)(out)</text>
        <dbReference type="Rhea" id="RHEA:57720"/>
        <dbReference type="ChEBI" id="CHEBI:15377"/>
        <dbReference type="ChEBI" id="CHEBI:15378"/>
        <dbReference type="ChEBI" id="CHEBI:30616"/>
        <dbReference type="ChEBI" id="CHEBI:43474"/>
        <dbReference type="ChEBI" id="CHEBI:456216"/>
        <dbReference type="EC" id="7.1.2.2"/>
    </reaction>
</comment>
<comment type="subunit">
    <text evidence="1">F-type ATPases have 2 components, CF(1) - the catalytic core - and CF(0) - the membrane proton channel. CF(1) has five subunits: alpha(3), beta(3), gamma(1), delta(1), epsilon(1). CF(0) has three main subunits: a(1), b(2) and c(9-12). The alpha and beta chains form an alternating ring which encloses part of the gamma chain. CF(1) is attached to CF(0) by a central stalk formed by the gamma and epsilon chains, while a peripheral stalk is formed by the delta and b chains.</text>
</comment>
<comment type="subcellular location">
    <subcellularLocation>
        <location evidence="1">Cell inner membrane</location>
        <topology evidence="1">Peripheral membrane protein</topology>
    </subcellularLocation>
</comment>
<comment type="similarity">
    <text evidence="1">Belongs to the ATPase alpha/beta chains family.</text>
</comment>
<evidence type="ECO:0000255" key="1">
    <source>
        <dbReference type="HAMAP-Rule" id="MF_01347"/>
    </source>
</evidence>
<organism>
    <name type="scientific">Thiobacillus denitrificans (strain ATCC 25259 / T1)</name>
    <dbReference type="NCBI Taxonomy" id="292415"/>
    <lineage>
        <taxon>Bacteria</taxon>
        <taxon>Pseudomonadati</taxon>
        <taxon>Pseudomonadota</taxon>
        <taxon>Betaproteobacteria</taxon>
        <taxon>Nitrosomonadales</taxon>
        <taxon>Thiobacillaceae</taxon>
        <taxon>Thiobacillus</taxon>
    </lineage>
</organism>
<accession>Q3SF66</accession>
<feature type="chain" id="PRO_0000254414" description="ATP synthase subunit beta">
    <location>
        <begin position="1"/>
        <end position="459"/>
    </location>
</feature>
<feature type="binding site" evidence="1">
    <location>
        <begin position="148"/>
        <end position="155"/>
    </location>
    <ligand>
        <name>ATP</name>
        <dbReference type="ChEBI" id="CHEBI:30616"/>
    </ligand>
</feature>
<keyword id="KW-0066">ATP synthesis</keyword>
<keyword id="KW-0067">ATP-binding</keyword>
<keyword id="KW-0997">Cell inner membrane</keyword>
<keyword id="KW-1003">Cell membrane</keyword>
<keyword id="KW-0139">CF(1)</keyword>
<keyword id="KW-0375">Hydrogen ion transport</keyword>
<keyword id="KW-0406">Ion transport</keyword>
<keyword id="KW-0472">Membrane</keyword>
<keyword id="KW-0547">Nucleotide-binding</keyword>
<keyword id="KW-1185">Reference proteome</keyword>
<keyword id="KW-1278">Translocase</keyword>
<keyword id="KW-0813">Transport</keyword>
<protein>
    <recommendedName>
        <fullName evidence="1">ATP synthase subunit beta</fullName>
        <ecNumber evidence="1">7.1.2.2</ecNumber>
    </recommendedName>
    <alternativeName>
        <fullName evidence="1">ATP synthase F1 sector subunit beta</fullName>
    </alternativeName>
    <alternativeName>
        <fullName evidence="1">F-ATPase subunit beta</fullName>
    </alternativeName>
</protein>
<sequence>MSNGKIVQIIGAVVDVEFPRDAMPKVMEALKMQAPELTFEVQQQLGDGVVRTIAMGSTDGLRRGMDVLSTGNPIMVPVGQKTLGRIMNVLGDPVDEAGPIGAETTMPIHRKAPAYADQAATVEILETGIKVIDLIMPIAKGGKVGLFGGAGVGKTVTLMELIRNIAVQHSGFSVFAGVGERTREGNDFYHEMKEGGVLDKVALVYGQMNEPPGNRLRVALTGLTMAEYFRDEGRDVLLFVDNIYRYTLAGTEVSALLGRMPSAVGYQPTLADEMGRLQERITSTKTGSITSFQAVYVPADDLTDPSPATTFAHLDATLVLSRQVAELGIYPAVDPLDSTSRILDPQVVGEEHYTVARKVQGTLQKYKELRDIIAILGMDELSPEDKLAVSRARKLQRFLSQPFFVAEVFTGAPGKYVTLKDTIAGFKAIVEGEYDHLPEQAFYMVGGIEEAVEKAKTIQ</sequence>
<name>ATPB_THIDA</name>
<proteinExistence type="inferred from homology"/>
<reference key="1">
    <citation type="journal article" date="2006" name="J. Bacteriol.">
        <title>The genome sequence of the obligately chemolithoautotrophic, facultatively anaerobic bacterium Thiobacillus denitrificans.</title>
        <authorList>
            <person name="Beller H.R."/>
            <person name="Chain P.S."/>
            <person name="Letain T.E."/>
            <person name="Chakicherla A."/>
            <person name="Larimer F.W."/>
            <person name="Richardson P.M."/>
            <person name="Coleman M.A."/>
            <person name="Wood A.P."/>
            <person name="Kelly D.P."/>
        </authorList>
    </citation>
    <scope>NUCLEOTIDE SEQUENCE [LARGE SCALE GENOMIC DNA]</scope>
    <source>
        <strain>ATCC 25259 / T1</strain>
    </source>
</reference>